<sequence>METLESELTCPICLELFEDPLLLPCAHSLCFNCAHRILVSHCATNESVESITAFQCPTCRHVITLSQRGLDGLKRNVTLQNIIDRFQKASVSGPNSPSETRRERAFDANTMTSAEKVLCQFCDQDPAQDAVKTCVTCEVSYCDECLKATHPNKKPFTGHRLIEPIPDSHIRGLMCLEHEDEKVNMYCVTDDQLICALCKLVGRHRDHQVAALSERYDKLKQNLESNLTNLIKRNTELETLLAKLIQTCQHVEVNASRQEAKLTEECDLLIEIIQQRRQIIGTKIKEGKVMRLRKLAQQIANCKQCIERSASLISQAEHSLKENDHARFLQTAKNITERVSMATASSQVLIPEINLNDTFDTFALDFSREKKLLECLDYLTAPNPPTIREELCTASYDTITVHWTSDDEFSVVSYELQYTIFTGQANVVSLCNSADSWMIVPNIKQNHYTVHGLQSGTKYIFMVKAINQAGSRSSEPGKLKTNSQPFKLDPKSAHRKLKVSHDNLTVERDESSSKKSHTPERFTSQGSYGVAGNVFIDSGRHYWEVVISGSTWYAIGLAYKSAPKHEWIGKNSASWALCRCNNNWVVRHNSKEIPIEPAPHLRRVGILLDYDNGSIAFYDALNSIHLYTFDVAFAQPVCPTFTVWNKCLTIITGLPIPDHLDCTEQLP</sequence>
<proteinExistence type="evidence at protein level"/>
<name>TRI18_HUMAN</name>
<feature type="chain" id="PRO_0000056227" description="E3 ubiquitin-protein ligase Midline-1">
    <location>
        <begin position="1"/>
        <end position="667"/>
    </location>
</feature>
<feature type="domain" description="COS" evidence="6">
    <location>
        <begin position="320"/>
        <end position="379"/>
    </location>
</feature>
<feature type="domain" description="Fibronectin type-III" evidence="4">
    <location>
        <begin position="381"/>
        <end position="484"/>
    </location>
</feature>
<feature type="domain" description="B30.2/SPRY" evidence="5">
    <location>
        <begin position="482"/>
        <end position="659"/>
    </location>
</feature>
<feature type="zinc finger region" description="RING-type" evidence="3">
    <location>
        <begin position="10"/>
        <end position="60"/>
    </location>
</feature>
<feature type="zinc finger region" description="B box-type 1" evidence="2">
    <location>
        <begin position="116"/>
        <end position="165"/>
    </location>
</feature>
<feature type="zinc finger region" description="B box-type 2" evidence="2">
    <location>
        <begin position="172"/>
        <end position="212"/>
    </location>
</feature>
<feature type="region of interest" description="Disordered" evidence="7">
    <location>
        <begin position="471"/>
        <end position="524"/>
    </location>
</feature>
<feature type="coiled-coil region" evidence="1">
    <location>
        <begin position="205"/>
        <end position="264"/>
    </location>
</feature>
<feature type="compositionally biased region" description="Polar residues" evidence="7">
    <location>
        <begin position="471"/>
        <end position="485"/>
    </location>
</feature>
<feature type="compositionally biased region" description="Basic and acidic residues" evidence="7">
    <location>
        <begin position="499"/>
        <end position="520"/>
    </location>
</feature>
<feature type="binding site">
    <location>
        <position position="119"/>
    </location>
    <ligand>
        <name>Zn(2+)</name>
        <dbReference type="ChEBI" id="CHEBI:29105"/>
        <label>1</label>
    </ligand>
</feature>
<feature type="binding site">
    <location>
        <position position="122"/>
    </location>
    <ligand>
        <name>Zn(2+)</name>
        <dbReference type="ChEBI" id="CHEBI:29105"/>
        <label>1</label>
    </ligand>
</feature>
<feature type="binding site">
    <location>
        <position position="134"/>
    </location>
    <ligand>
        <name>Zn(2+)</name>
        <dbReference type="ChEBI" id="CHEBI:29105"/>
        <label>2</label>
    </ligand>
</feature>
<feature type="binding site">
    <location>
        <position position="137"/>
    </location>
    <ligand>
        <name>Zn(2+)</name>
        <dbReference type="ChEBI" id="CHEBI:29105"/>
        <label>2</label>
    </ligand>
</feature>
<feature type="binding site">
    <location>
        <position position="142"/>
    </location>
    <ligand>
        <name>Zn(2+)</name>
        <dbReference type="ChEBI" id="CHEBI:29105"/>
        <label>1</label>
    </ligand>
</feature>
<feature type="binding site">
    <location>
        <position position="145"/>
    </location>
    <ligand>
        <name>Zn(2+)</name>
        <dbReference type="ChEBI" id="CHEBI:29105"/>
        <label>1</label>
    </ligand>
</feature>
<feature type="binding site">
    <location>
        <position position="150"/>
    </location>
    <ligand>
        <name>Zn(2+)</name>
        <dbReference type="ChEBI" id="CHEBI:29105"/>
        <label>2</label>
    </ligand>
</feature>
<feature type="binding site">
    <location>
        <position position="159"/>
    </location>
    <ligand>
        <name>Zn(2+)</name>
        <dbReference type="ChEBI" id="CHEBI:29105"/>
        <label>2</label>
    </ligand>
</feature>
<feature type="binding site" evidence="2">
    <location>
        <position position="175"/>
    </location>
    <ligand>
        <name>Zn(2+)</name>
        <dbReference type="ChEBI" id="CHEBI:29105"/>
        <label>3</label>
    </ligand>
</feature>
<feature type="binding site" evidence="2">
    <location>
        <position position="178"/>
    </location>
    <ligand>
        <name>Zn(2+)</name>
        <dbReference type="ChEBI" id="CHEBI:29105"/>
        <label>3</label>
    </ligand>
</feature>
<feature type="binding site" evidence="2">
    <location>
        <position position="198"/>
    </location>
    <ligand>
        <name>Zn(2+)</name>
        <dbReference type="ChEBI" id="CHEBI:29105"/>
        <label>3</label>
    </ligand>
</feature>
<feature type="binding site" evidence="2">
    <location>
        <position position="204"/>
    </location>
    <ligand>
        <name>Zn(2+)</name>
        <dbReference type="ChEBI" id="CHEBI:29105"/>
        <label>3</label>
    </ligand>
</feature>
<feature type="modified residue" description="Phosphoserine" evidence="21 22">
    <location>
        <position position="92"/>
    </location>
</feature>
<feature type="modified residue" description="Phosphoserine" evidence="22">
    <location>
        <position position="96"/>
    </location>
</feature>
<feature type="modified residue" description="Phosphoserine" evidence="22">
    <location>
        <position position="511"/>
    </location>
</feature>
<feature type="splice variant" id="VSP_005735" description="In isoform 2." evidence="18 19">
    <location>
        <begin position="553"/>
        <end position="667"/>
    </location>
</feature>
<feature type="sequence variant" id="VAR_013758" description="In GBBB." evidence="17">
    <original>C</original>
    <variation>R</variation>
    <location>
        <position position="266"/>
    </location>
</feature>
<feature type="sequence variant" id="VAR_025495" description="In GBBB; dbSNP:rs104894866." evidence="13">
    <original>L</original>
    <variation>P</variation>
    <location>
        <position position="295"/>
    </location>
</feature>
<feature type="sequence variant" id="VAR_025496" description="In GBBB." evidence="13">
    <original>LC</original>
    <variation>R</variation>
    <location>
        <begin position="391"/>
        <end position="392"/>
    </location>
</feature>
<feature type="sequence variant" id="VAR_013759" description="In GBBB." evidence="16">
    <location>
        <position position="438"/>
    </location>
</feature>
<feature type="sequence variant" id="VAR_013760" description="In GBBB.">
    <original>V</original>
    <variation>VFIDSGRHL</variation>
    <location>
        <position position="534"/>
    </location>
</feature>
<feature type="sequence variant" id="VAR_013761" description="In GBBB." evidence="17">
    <original>I</original>
    <variation>T</variation>
    <location>
        <position position="536"/>
    </location>
</feature>
<feature type="sequence variant" id="VAR_013762" description="In GBBB; dbSNP:rs28934611." evidence="10">
    <original>L</original>
    <variation>P</variation>
    <location>
        <position position="626"/>
    </location>
</feature>
<feature type="sequence conflict" description="In Ref. 3; AAC32999." evidence="20" ref="3">
    <original>T</original>
    <variation>P</variation>
    <location>
        <position position="228"/>
    </location>
</feature>
<feature type="sequence conflict" description="In Ref. 3; AAC32998." evidence="20" ref="3">
    <original>Q</original>
    <variation>P</variation>
    <location>
        <position position="484"/>
    </location>
</feature>
<feature type="strand" evidence="24">
    <location>
        <begin position="112"/>
        <end position="114"/>
    </location>
</feature>
<feature type="strand" evidence="24">
    <location>
        <begin position="124"/>
        <end position="126"/>
    </location>
</feature>
<feature type="strand" evidence="24">
    <location>
        <begin position="132"/>
        <end position="134"/>
    </location>
</feature>
<feature type="turn" evidence="24">
    <location>
        <begin position="135"/>
        <end position="138"/>
    </location>
</feature>
<feature type="strand" evidence="24">
    <location>
        <begin position="139"/>
        <end position="141"/>
    </location>
</feature>
<feature type="helix" evidence="24">
    <location>
        <begin position="143"/>
        <end position="149"/>
    </location>
</feature>
<feature type="strand" evidence="24">
    <location>
        <begin position="154"/>
        <end position="156"/>
    </location>
</feature>
<feature type="strand" evidence="25">
    <location>
        <begin position="161"/>
        <end position="163"/>
    </location>
</feature>
<feature type="strand" evidence="25">
    <location>
        <begin position="179"/>
        <end position="181"/>
    </location>
</feature>
<feature type="strand" evidence="23">
    <location>
        <begin position="185"/>
        <end position="187"/>
    </location>
</feature>
<feature type="turn" evidence="23">
    <location>
        <begin position="188"/>
        <end position="191"/>
    </location>
</feature>
<feature type="strand" evidence="23">
    <location>
        <begin position="192"/>
        <end position="194"/>
    </location>
</feature>
<feature type="helix" evidence="23">
    <location>
        <begin position="196"/>
        <end position="200"/>
    </location>
</feature>
<feature type="strand" evidence="25">
    <location>
        <begin position="205"/>
        <end position="207"/>
    </location>
</feature>
<feature type="helix" evidence="26">
    <location>
        <begin position="325"/>
        <end position="346"/>
    </location>
</feature>
<feature type="strand" evidence="26">
    <location>
        <begin position="352"/>
        <end position="355"/>
    </location>
</feature>
<feature type="helix" evidence="26">
    <location>
        <begin position="356"/>
        <end position="374"/>
    </location>
</feature>
<feature type="helix" evidence="27">
    <location>
        <begin position="490"/>
        <end position="492"/>
    </location>
</feature>
<feature type="strand" evidence="27">
    <location>
        <begin position="497"/>
        <end position="499"/>
    </location>
</feature>
<feature type="strand" evidence="27">
    <location>
        <begin position="505"/>
        <end position="508"/>
    </location>
</feature>
<feature type="strand" evidence="27">
    <location>
        <begin position="529"/>
        <end position="533"/>
    </location>
</feature>
<feature type="strand" evidence="27">
    <location>
        <begin position="538"/>
        <end position="549"/>
    </location>
</feature>
<feature type="strand" evidence="27">
    <location>
        <begin position="551"/>
        <end position="559"/>
    </location>
</feature>
<feature type="strand" evidence="27">
    <location>
        <begin position="568"/>
        <end position="571"/>
    </location>
</feature>
<feature type="strand" evidence="27">
    <location>
        <begin position="574"/>
        <end position="580"/>
    </location>
</feature>
<feature type="strand" evidence="27">
    <location>
        <begin position="583"/>
        <end position="588"/>
    </location>
</feature>
<feature type="strand" evidence="27">
    <location>
        <begin position="591"/>
        <end position="594"/>
    </location>
</feature>
<feature type="strand" evidence="27">
    <location>
        <begin position="603"/>
        <end position="609"/>
    </location>
</feature>
<feature type="turn" evidence="27">
    <location>
        <begin position="610"/>
        <end position="613"/>
    </location>
</feature>
<feature type="strand" evidence="27">
    <location>
        <begin position="614"/>
        <end position="619"/>
    </location>
</feature>
<feature type="turn" evidence="27">
    <location>
        <begin position="620"/>
        <end position="623"/>
    </location>
</feature>
<feature type="strand" evidence="27">
    <location>
        <begin position="624"/>
        <end position="630"/>
    </location>
</feature>
<feature type="strand" evidence="27">
    <location>
        <begin position="637"/>
        <end position="654"/>
    </location>
</feature>
<accession>O15344</accession>
<accession>B2RCG2</accession>
<accession>O75361</accession>
<accession>Q9BZX5</accession>
<evidence type="ECO:0000255" key="1"/>
<evidence type="ECO:0000255" key="2">
    <source>
        <dbReference type="PROSITE-ProRule" id="PRU00024"/>
    </source>
</evidence>
<evidence type="ECO:0000255" key="3">
    <source>
        <dbReference type="PROSITE-ProRule" id="PRU00175"/>
    </source>
</evidence>
<evidence type="ECO:0000255" key="4">
    <source>
        <dbReference type="PROSITE-ProRule" id="PRU00316"/>
    </source>
</evidence>
<evidence type="ECO:0000255" key="5">
    <source>
        <dbReference type="PROSITE-ProRule" id="PRU00548"/>
    </source>
</evidence>
<evidence type="ECO:0000255" key="6">
    <source>
        <dbReference type="PROSITE-ProRule" id="PRU00586"/>
    </source>
</evidence>
<evidence type="ECO:0000256" key="7">
    <source>
        <dbReference type="SAM" id="MobiDB-lite"/>
    </source>
</evidence>
<evidence type="ECO:0000269" key="8">
    <source>
    </source>
</evidence>
<evidence type="ECO:0000269" key="9">
    <source>
    </source>
</evidence>
<evidence type="ECO:0000269" key="10">
    <source>
    </source>
</evidence>
<evidence type="ECO:0000269" key="11">
    <source>
    </source>
</evidence>
<evidence type="ECO:0000269" key="12">
    <source>
    </source>
</evidence>
<evidence type="ECO:0000269" key="13">
    <source>
    </source>
</evidence>
<evidence type="ECO:0000269" key="14">
    <source>
    </source>
</evidence>
<evidence type="ECO:0000269" key="15">
    <source>
    </source>
</evidence>
<evidence type="ECO:0000269" key="16">
    <source>
    </source>
</evidence>
<evidence type="ECO:0000269" key="17">
    <source>
    </source>
</evidence>
<evidence type="ECO:0000303" key="18">
    <source>
    </source>
</evidence>
<evidence type="ECO:0000303" key="19">
    <source>
    </source>
</evidence>
<evidence type="ECO:0000305" key="20"/>
<evidence type="ECO:0007744" key="21">
    <source>
    </source>
</evidence>
<evidence type="ECO:0007744" key="22">
    <source>
    </source>
</evidence>
<evidence type="ECO:0007829" key="23">
    <source>
        <dbReference type="PDB" id="2DQ5"/>
    </source>
</evidence>
<evidence type="ECO:0007829" key="24">
    <source>
        <dbReference type="PDB" id="2FFW"/>
    </source>
</evidence>
<evidence type="ECO:0007829" key="25">
    <source>
        <dbReference type="PDB" id="2JUN"/>
    </source>
</evidence>
<evidence type="ECO:0007829" key="26">
    <source>
        <dbReference type="PDB" id="5IM8"/>
    </source>
</evidence>
<evidence type="ECO:0007829" key="27">
    <source>
        <dbReference type="PDB" id="7QRY"/>
    </source>
</evidence>
<protein>
    <recommendedName>
        <fullName>E3 ubiquitin-protein ligase Midline-1</fullName>
        <ecNumber>2.3.2.27</ecNumber>
    </recommendedName>
    <alternativeName>
        <fullName>Midin</fullName>
    </alternativeName>
    <alternativeName>
        <fullName>Putative transcription factor XPRF</fullName>
    </alternativeName>
    <alternativeName>
        <fullName>RING finger protein 59</fullName>
    </alternativeName>
    <alternativeName>
        <fullName>RING finger protein Midline-1</fullName>
    </alternativeName>
    <alternativeName>
        <fullName evidence="20">RING-type E3 ubiquitin transferase Midline-1</fullName>
    </alternativeName>
    <alternativeName>
        <fullName>Tripartite motif-containing protein 18</fullName>
    </alternativeName>
</protein>
<keyword id="KW-0002">3D-structure</keyword>
<keyword id="KW-0025">Alternative splicing</keyword>
<keyword id="KW-0175">Coiled coil</keyword>
<keyword id="KW-0963">Cytoplasm</keyword>
<keyword id="KW-0206">Cytoskeleton</keyword>
<keyword id="KW-0225">Disease variant</keyword>
<keyword id="KW-0479">Metal-binding</keyword>
<keyword id="KW-0493">Microtubule</keyword>
<keyword id="KW-0597">Phosphoprotein</keyword>
<keyword id="KW-1267">Proteomics identification</keyword>
<keyword id="KW-1185">Reference proteome</keyword>
<keyword id="KW-0677">Repeat</keyword>
<keyword id="KW-0808">Transferase</keyword>
<keyword id="KW-0833">Ubl conjugation pathway</keyword>
<keyword id="KW-0862">Zinc</keyword>
<keyword id="KW-0863">Zinc-finger</keyword>
<organism>
    <name type="scientific">Homo sapiens</name>
    <name type="common">Human</name>
    <dbReference type="NCBI Taxonomy" id="9606"/>
    <lineage>
        <taxon>Eukaryota</taxon>
        <taxon>Metazoa</taxon>
        <taxon>Chordata</taxon>
        <taxon>Craniata</taxon>
        <taxon>Vertebrata</taxon>
        <taxon>Euteleostomi</taxon>
        <taxon>Mammalia</taxon>
        <taxon>Eutheria</taxon>
        <taxon>Euarchontoglires</taxon>
        <taxon>Primates</taxon>
        <taxon>Haplorrhini</taxon>
        <taxon>Catarrhini</taxon>
        <taxon>Hominidae</taxon>
        <taxon>Homo</taxon>
    </lineage>
</organism>
<gene>
    <name type="primary">MID1</name>
    <name type="synonym">FXY</name>
    <name type="synonym">RNF59</name>
    <name type="synonym">TRIM18</name>
    <name type="synonym">XPRF</name>
</gene>
<dbReference type="EC" id="2.3.2.27"/>
<dbReference type="EMBL" id="Y13667">
    <property type="protein sequence ID" value="CAA74018.1"/>
    <property type="molecule type" value="mRNA"/>
</dbReference>
<dbReference type="EMBL" id="AF035360">
    <property type="protein sequence ID" value="AAB99951.1"/>
    <property type="molecule type" value="mRNA"/>
</dbReference>
<dbReference type="EMBL" id="AF041206">
    <property type="protein sequence ID" value="AAC32998.1"/>
    <property type="molecule type" value="mRNA"/>
</dbReference>
<dbReference type="EMBL" id="AF041207">
    <property type="protein sequence ID" value="AAC32999.1"/>
    <property type="molecule type" value="mRNA"/>
</dbReference>
<dbReference type="EMBL" id="AF041208">
    <property type="protein sequence ID" value="AAC33000.1"/>
    <property type="molecule type" value="mRNA"/>
</dbReference>
<dbReference type="EMBL" id="AF041209">
    <property type="protein sequence ID" value="AAC33001.1"/>
    <property type="molecule type" value="mRNA"/>
</dbReference>
<dbReference type="EMBL" id="AF041210">
    <property type="protein sequence ID" value="AAC33002.1"/>
    <property type="molecule type" value="mRNA"/>
</dbReference>
<dbReference type="EMBL" id="AF230976">
    <property type="protein sequence ID" value="AAG50191.1"/>
    <property type="molecule type" value="mRNA"/>
</dbReference>
<dbReference type="EMBL" id="AF230977">
    <property type="protein sequence ID" value="AAG50192.1"/>
    <property type="molecule type" value="mRNA"/>
</dbReference>
<dbReference type="EMBL" id="AF269101">
    <property type="protein sequence ID" value="AAG33130.1"/>
    <property type="molecule type" value="mRNA"/>
</dbReference>
<dbReference type="EMBL" id="AK315095">
    <property type="protein sequence ID" value="BAG37559.1"/>
    <property type="molecule type" value="mRNA"/>
</dbReference>
<dbReference type="EMBL" id="CH471074">
    <property type="protein sequence ID" value="EAW98780.1"/>
    <property type="molecule type" value="Genomic_DNA"/>
</dbReference>
<dbReference type="EMBL" id="BC053626">
    <property type="protein sequence ID" value="AAH53626.1"/>
    <property type="molecule type" value="mRNA"/>
</dbReference>
<dbReference type="CCDS" id="CCDS14138.1">
    <molecule id="O15344-1"/>
</dbReference>
<dbReference type="PIR" id="T09482">
    <property type="entry name" value="T09482"/>
</dbReference>
<dbReference type="RefSeq" id="NP_000372.1">
    <molecule id="O15344-1"/>
    <property type="nucleotide sequence ID" value="NM_000381.4"/>
</dbReference>
<dbReference type="RefSeq" id="NP_001092094.1">
    <molecule id="O15344-1"/>
    <property type="nucleotide sequence ID" value="NM_001098624.2"/>
</dbReference>
<dbReference type="RefSeq" id="NP_001180206.1">
    <molecule id="O15344-1"/>
    <property type="nucleotide sequence ID" value="NM_001193277.1"/>
</dbReference>
<dbReference type="RefSeq" id="NP_001180207.1">
    <property type="nucleotide sequence ID" value="NM_001193278.1"/>
</dbReference>
<dbReference type="RefSeq" id="NP_001180208.1">
    <property type="nucleotide sequence ID" value="NM_001193279.1"/>
</dbReference>
<dbReference type="RefSeq" id="NP_001180209.1">
    <property type="nucleotide sequence ID" value="NM_001193280.1"/>
</dbReference>
<dbReference type="RefSeq" id="NP_001180210.1">
    <property type="nucleotide sequence ID" value="NM_001193281.1"/>
</dbReference>
<dbReference type="RefSeq" id="NP_001334662.1">
    <molecule id="O15344-1"/>
    <property type="nucleotide sequence ID" value="NM_001347733.2"/>
</dbReference>
<dbReference type="RefSeq" id="NP_150632.1">
    <molecule id="O15344-1"/>
    <property type="nucleotide sequence ID" value="NM_033290.4"/>
</dbReference>
<dbReference type="RefSeq" id="XP_016885025.1">
    <property type="nucleotide sequence ID" value="XM_017029536.1"/>
</dbReference>
<dbReference type="RefSeq" id="XP_016885029.1">
    <property type="nucleotide sequence ID" value="XM_017029540.1"/>
</dbReference>
<dbReference type="PDB" id="2DQ5">
    <property type="method" value="NMR"/>
    <property type="chains" value="A=168-214"/>
</dbReference>
<dbReference type="PDB" id="2FFW">
    <property type="method" value="NMR"/>
    <property type="chains" value="A=87-164"/>
</dbReference>
<dbReference type="PDB" id="2JUN">
    <property type="method" value="NMR"/>
    <property type="chains" value="A=114-214"/>
</dbReference>
<dbReference type="PDB" id="5IM8">
    <property type="method" value="NMR"/>
    <property type="chains" value="A=320-379"/>
</dbReference>
<dbReference type="PDB" id="7QRY">
    <property type="method" value="X-ray"/>
    <property type="resolution" value="2.07 A"/>
    <property type="chains" value="A/B/C/D=482-667"/>
</dbReference>
<dbReference type="PDBsum" id="2DQ5"/>
<dbReference type="PDBsum" id="2FFW"/>
<dbReference type="PDBsum" id="2JUN"/>
<dbReference type="PDBsum" id="5IM8"/>
<dbReference type="PDBsum" id="7QRY"/>
<dbReference type="BMRB" id="O15344"/>
<dbReference type="SMR" id="O15344"/>
<dbReference type="BioGRID" id="110427">
    <property type="interactions" value="133"/>
</dbReference>
<dbReference type="CORUM" id="O15344"/>
<dbReference type="FunCoup" id="O15344">
    <property type="interactions" value="400"/>
</dbReference>
<dbReference type="IntAct" id="O15344">
    <property type="interactions" value="67"/>
</dbReference>
<dbReference type="MINT" id="O15344"/>
<dbReference type="STRING" id="9606.ENSP00000414521"/>
<dbReference type="GlyGen" id="O15344">
    <property type="glycosylation" value="2 sites, 1 N-linked glycan (1 site), 1 O-linked glycan (1 site)"/>
</dbReference>
<dbReference type="iPTMnet" id="O15344"/>
<dbReference type="PhosphoSitePlus" id="O15344"/>
<dbReference type="BioMuta" id="MID1"/>
<dbReference type="jPOST" id="O15344"/>
<dbReference type="MassIVE" id="O15344"/>
<dbReference type="PaxDb" id="9606-ENSP00000312678"/>
<dbReference type="PeptideAtlas" id="O15344"/>
<dbReference type="ProteomicsDB" id="48594">
    <molecule id="O15344-1"/>
</dbReference>
<dbReference type="ProteomicsDB" id="48595">
    <molecule id="O15344-2"/>
</dbReference>
<dbReference type="Pumba" id="O15344"/>
<dbReference type="Antibodypedia" id="499">
    <property type="antibodies" value="243 antibodies from 29 providers"/>
</dbReference>
<dbReference type="DNASU" id="4281"/>
<dbReference type="Ensembl" id="ENST00000317552.9">
    <molecule id="O15344-1"/>
    <property type="protein sequence ID" value="ENSP00000312678.4"/>
    <property type="gene ID" value="ENSG00000101871.18"/>
</dbReference>
<dbReference type="Ensembl" id="ENST00000380779.5">
    <molecule id="O15344-1"/>
    <property type="protein sequence ID" value="ENSP00000370156.1"/>
    <property type="gene ID" value="ENSG00000101871.18"/>
</dbReference>
<dbReference type="Ensembl" id="ENST00000380780.5">
    <molecule id="O15344-1"/>
    <property type="protein sequence ID" value="ENSP00000370157.1"/>
    <property type="gene ID" value="ENSG00000101871.18"/>
</dbReference>
<dbReference type="Ensembl" id="ENST00000380782.6">
    <molecule id="O15344-2"/>
    <property type="protein sequence ID" value="ENSP00000370159.1"/>
    <property type="gene ID" value="ENSG00000101871.18"/>
</dbReference>
<dbReference type="Ensembl" id="ENST00000380785.5">
    <molecule id="O15344-1"/>
    <property type="protein sequence ID" value="ENSP00000370162.1"/>
    <property type="gene ID" value="ENSG00000101871.18"/>
</dbReference>
<dbReference type="Ensembl" id="ENST00000380787.5">
    <molecule id="O15344-1"/>
    <property type="protein sequence ID" value="ENSP00000370164.1"/>
    <property type="gene ID" value="ENSG00000101871.18"/>
</dbReference>
<dbReference type="Ensembl" id="ENST00000413894.6">
    <molecule id="O15344-1"/>
    <property type="protein sequence ID" value="ENSP00000391154.2"/>
    <property type="gene ID" value="ENSG00000101871.18"/>
</dbReference>
<dbReference type="Ensembl" id="ENST00000453318.6">
    <molecule id="O15344-1"/>
    <property type="protein sequence ID" value="ENSP00000414521.2"/>
    <property type="gene ID" value="ENSG00000101871.18"/>
</dbReference>
<dbReference type="GeneID" id="4281"/>
<dbReference type="KEGG" id="hsa:4281"/>
<dbReference type="MANE-Select" id="ENST00000317552.9">
    <property type="protein sequence ID" value="ENSP00000312678.4"/>
    <property type="RefSeq nucleotide sequence ID" value="NM_000381.4"/>
    <property type="RefSeq protein sequence ID" value="NP_000372.1"/>
</dbReference>
<dbReference type="UCSC" id="uc004cte.5">
    <molecule id="O15344-1"/>
    <property type="organism name" value="human"/>
</dbReference>
<dbReference type="AGR" id="HGNC:7095"/>
<dbReference type="CTD" id="4281"/>
<dbReference type="DisGeNET" id="4281"/>
<dbReference type="GeneCards" id="MID1"/>
<dbReference type="GeneReviews" id="MID1"/>
<dbReference type="HGNC" id="HGNC:7095">
    <property type="gene designation" value="MID1"/>
</dbReference>
<dbReference type="HPA" id="ENSG00000101871">
    <property type="expression patterns" value="Low tissue specificity"/>
</dbReference>
<dbReference type="MalaCards" id="MID1"/>
<dbReference type="MIM" id="300000">
    <property type="type" value="phenotype"/>
</dbReference>
<dbReference type="MIM" id="300552">
    <property type="type" value="gene"/>
</dbReference>
<dbReference type="neXtProt" id="NX_O15344"/>
<dbReference type="OpenTargets" id="ENSG00000101871"/>
<dbReference type="Orphanet" id="2745">
    <property type="disease" value="Opitz GBBB syndrome"/>
</dbReference>
<dbReference type="PharmGKB" id="PA30816"/>
<dbReference type="VEuPathDB" id="HostDB:ENSG00000101871"/>
<dbReference type="eggNOG" id="KOG2177">
    <property type="taxonomic scope" value="Eukaryota"/>
</dbReference>
<dbReference type="GeneTree" id="ENSGT00940000155821"/>
<dbReference type="InParanoid" id="O15344"/>
<dbReference type="OMA" id="FCDQEPA"/>
<dbReference type="OrthoDB" id="9049620at2759"/>
<dbReference type="PAN-GO" id="O15344">
    <property type="GO annotations" value="2 GO annotations based on evolutionary models"/>
</dbReference>
<dbReference type="PhylomeDB" id="O15344"/>
<dbReference type="TreeFam" id="TF333654"/>
<dbReference type="PathwayCommons" id="O15344"/>
<dbReference type="Reactome" id="R-HSA-877300">
    <property type="pathway name" value="Interferon gamma signaling"/>
</dbReference>
<dbReference type="SignaLink" id="O15344"/>
<dbReference type="SIGNOR" id="O15344"/>
<dbReference type="BioGRID-ORCS" id="4281">
    <property type="hits" value="15 hits in 818 CRISPR screens"/>
</dbReference>
<dbReference type="ChiTaRS" id="MID1">
    <property type="organism name" value="human"/>
</dbReference>
<dbReference type="EvolutionaryTrace" id="O15344"/>
<dbReference type="GeneWiki" id="MID1"/>
<dbReference type="GenomeRNAi" id="4281"/>
<dbReference type="Pharos" id="O15344">
    <property type="development level" value="Tbio"/>
</dbReference>
<dbReference type="PRO" id="PR:O15344"/>
<dbReference type="Proteomes" id="UP000005640">
    <property type="component" value="Chromosome X"/>
</dbReference>
<dbReference type="RNAct" id="O15344">
    <property type="molecule type" value="protein"/>
</dbReference>
<dbReference type="Bgee" id="ENSG00000101871">
    <property type="expression patterns" value="Expressed in mucosa of paranasal sinus and 199 other cell types or tissues"/>
</dbReference>
<dbReference type="ExpressionAtlas" id="O15344">
    <property type="expression patterns" value="baseline and differential"/>
</dbReference>
<dbReference type="GO" id="GO:0034451">
    <property type="term" value="C:centriolar satellite"/>
    <property type="evidence" value="ECO:0000314"/>
    <property type="project" value="HPA"/>
</dbReference>
<dbReference type="GO" id="GO:0005737">
    <property type="term" value="C:cytoplasm"/>
    <property type="evidence" value="ECO:0000318"/>
    <property type="project" value="GO_Central"/>
</dbReference>
<dbReference type="GO" id="GO:0005829">
    <property type="term" value="C:cytosol"/>
    <property type="evidence" value="ECO:0000314"/>
    <property type="project" value="HPA"/>
</dbReference>
<dbReference type="GO" id="GO:0005794">
    <property type="term" value="C:Golgi apparatus"/>
    <property type="evidence" value="ECO:0000314"/>
    <property type="project" value="HPA"/>
</dbReference>
<dbReference type="GO" id="GO:0005874">
    <property type="term" value="C:microtubule"/>
    <property type="evidence" value="ECO:0000314"/>
    <property type="project" value="UniProtKB"/>
</dbReference>
<dbReference type="GO" id="GO:0005875">
    <property type="term" value="C:microtubule associated complex"/>
    <property type="evidence" value="ECO:0000304"/>
    <property type="project" value="ProtInc"/>
</dbReference>
<dbReference type="GO" id="GO:0005819">
    <property type="term" value="C:spindle"/>
    <property type="evidence" value="ECO:0007669"/>
    <property type="project" value="UniProtKB-SubCell"/>
</dbReference>
<dbReference type="GO" id="GO:0019899">
    <property type="term" value="F:enzyme binding"/>
    <property type="evidence" value="ECO:0000353"/>
    <property type="project" value="UniProtKB"/>
</dbReference>
<dbReference type="GO" id="GO:0042802">
    <property type="term" value="F:identical protein binding"/>
    <property type="evidence" value="ECO:0000353"/>
    <property type="project" value="IntAct"/>
</dbReference>
<dbReference type="GO" id="GO:0008017">
    <property type="term" value="F:microtubule binding"/>
    <property type="evidence" value="ECO:0000315"/>
    <property type="project" value="UniProtKB"/>
</dbReference>
<dbReference type="GO" id="GO:0051219">
    <property type="term" value="F:phosphoprotein binding"/>
    <property type="evidence" value="ECO:0000353"/>
    <property type="project" value="UniProtKB"/>
</dbReference>
<dbReference type="GO" id="GO:0042803">
    <property type="term" value="F:protein homodimerization activity"/>
    <property type="evidence" value="ECO:0000314"/>
    <property type="project" value="UniProtKB"/>
</dbReference>
<dbReference type="GO" id="GO:0016740">
    <property type="term" value="F:transferase activity"/>
    <property type="evidence" value="ECO:0007669"/>
    <property type="project" value="UniProtKB-KW"/>
</dbReference>
<dbReference type="GO" id="GO:0031625">
    <property type="term" value="F:ubiquitin protein ligase binding"/>
    <property type="evidence" value="ECO:0000353"/>
    <property type="project" value="UniProtKB"/>
</dbReference>
<dbReference type="GO" id="GO:0008270">
    <property type="term" value="F:zinc ion binding"/>
    <property type="evidence" value="ECO:0007669"/>
    <property type="project" value="UniProtKB-KW"/>
</dbReference>
<dbReference type="GO" id="GO:0000226">
    <property type="term" value="P:microtubule cytoskeleton organization"/>
    <property type="evidence" value="ECO:0000304"/>
    <property type="project" value="ProtInc"/>
</dbReference>
<dbReference type="GO" id="GO:0007026">
    <property type="term" value="P:negative regulation of microtubule depolymerization"/>
    <property type="evidence" value="ECO:0007669"/>
    <property type="project" value="Ensembl"/>
</dbReference>
<dbReference type="GO" id="GO:0007389">
    <property type="term" value="P:pattern specification process"/>
    <property type="evidence" value="ECO:0000304"/>
    <property type="project" value="ProtInc"/>
</dbReference>
<dbReference type="GO" id="GO:0032874">
    <property type="term" value="P:positive regulation of stress-activated MAPK cascade"/>
    <property type="evidence" value="ECO:0000315"/>
    <property type="project" value="UniProtKB"/>
</dbReference>
<dbReference type="GO" id="GO:0035372">
    <property type="term" value="P:protein localization to microtubule"/>
    <property type="evidence" value="ECO:0000315"/>
    <property type="project" value="UniProtKB"/>
</dbReference>
<dbReference type="GO" id="GO:0070507">
    <property type="term" value="P:regulation of microtubule cytoskeleton organization"/>
    <property type="evidence" value="ECO:0000318"/>
    <property type="project" value="GO_Central"/>
</dbReference>
<dbReference type="CDD" id="cd19836">
    <property type="entry name" value="Bbox1_MID1_C-I"/>
    <property type="match status" value="1"/>
</dbReference>
<dbReference type="CDD" id="cd19822">
    <property type="entry name" value="Bbox2_MID1_C-I"/>
    <property type="match status" value="1"/>
</dbReference>
<dbReference type="CDD" id="cd00063">
    <property type="entry name" value="FN3"/>
    <property type="match status" value="1"/>
</dbReference>
<dbReference type="CDD" id="cd16753">
    <property type="entry name" value="RING-HC_MID1"/>
    <property type="match status" value="1"/>
</dbReference>
<dbReference type="CDD" id="cd12892">
    <property type="entry name" value="SPRY_PRY_TRIM18"/>
    <property type="match status" value="1"/>
</dbReference>
<dbReference type="FunFam" id="2.60.120.920:FF:000010">
    <property type="entry name" value="E3 ubiquitin-protein ligase Midline-1"/>
    <property type="match status" value="1"/>
</dbReference>
<dbReference type="FunFam" id="3.30.160.60:FF:000334">
    <property type="entry name" value="E3 ubiquitin-protein ligase Midline-1"/>
    <property type="match status" value="1"/>
</dbReference>
<dbReference type="FunFam" id="2.60.40.10:FF:000153">
    <property type="entry name" value="Probable E3 ubiquitin-protein ligase MID2"/>
    <property type="match status" value="1"/>
</dbReference>
<dbReference type="FunFam" id="3.30.40.10:FF:000014">
    <property type="entry name" value="probable E3 ubiquitin-protein ligase MID2"/>
    <property type="match status" value="1"/>
</dbReference>
<dbReference type="FunFam" id="4.10.830.40:FF:000002">
    <property type="entry name" value="probable E3 ubiquitin-protein ligase MID2"/>
    <property type="match status" value="1"/>
</dbReference>
<dbReference type="Gene3D" id="2.60.120.920">
    <property type="match status" value="1"/>
</dbReference>
<dbReference type="Gene3D" id="4.10.830.40">
    <property type="match status" value="1"/>
</dbReference>
<dbReference type="Gene3D" id="3.30.160.60">
    <property type="entry name" value="Classic Zinc Finger"/>
    <property type="match status" value="1"/>
</dbReference>
<dbReference type="Gene3D" id="2.60.40.10">
    <property type="entry name" value="Immunoglobulins"/>
    <property type="match status" value="1"/>
</dbReference>
<dbReference type="Gene3D" id="3.30.40.10">
    <property type="entry name" value="Zinc/RING finger domain, C3HC4 (zinc finger)"/>
    <property type="match status" value="1"/>
</dbReference>
<dbReference type="InterPro" id="IPR001870">
    <property type="entry name" value="B30.2/SPRY"/>
</dbReference>
<dbReference type="InterPro" id="IPR043136">
    <property type="entry name" value="B30.2/SPRY_sf"/>
</dbReference>
<dbReference type="InterPro" id="IPR003649">
    <property type="entry name" value="Bbox_C"/>
</dbReference>
<dbReference type="InterPro" id="IPR003879">
    <property type="entry name" value="Butyrophylin_SPRY"/>
</dbReference>
<dbReference type="InterPro" id="IPR013320">
    <property type="entry name" value="ConA-like_dom_sf"/>
</dbReference>
<dbReference type="InterPro" id="IPR017903">
    <property type="entry name" value="COS_domain"/>
</dbReference>
<dbReference type="InterPro" id="IPR050617">
    <property type="entry name" value="E3_ligase_FN3/SPRY"/>
</dbReference>
<dbReference type="InterPro" id="IPR003961">
    <property type="entry name" value="FN3_dom"/>
</dbReference>
<dbReference type="InterPro" id="IPR036116">
    <property type="entry name" value="FN3_sf"/>
</dbReference>
<dbReference type="InterPro" id="IPR013783">
    <property type="entry name" value="Ig-like_fold"/>
</dbReference>
<dbReference type="InterPro" id="IPR047095">
    <property type="entry name" value="MID1_Bbox1_Zfn"/>
</dbReference>
<dbReference type="InterPro" id="IPR027727">
    <property type="entry name" value="MID1_Bbox2_Zfn"/>
</dbReference>
<dbReference type="InterPro" id="IPR040859">
    <property type="entry name" value="Midline-1_COS"/>
</dbReference>
<dbReference type="InterPro" id="IPR003877">
    <property type="entry name" value="SPRY_dom"/>
</dbReference>
<dbReference type="InterPro" id="IPR027370">
    <property type="entry name" value="Znf-RING_euk"/>
</dbReference>
<dbReference type="InterPro" id="IPR000315">
    <property type="entry name" value="Znf_B-box"/>
</dbReference>
<dbReference type="InterPro" id="IPR001841">
    <property type="entry name" value="Znf_RING"/>
</dbReference>
<dbReference type="InterPro" id="IPR013083">
    <property type="entry name" value="Znf_RING/FYVE/PHD"/>
</dbReference>
<dbReference type="InterPro" id="IPR017907">
    <property type="entry name" value="Znf_RING_CS"/>
</dbReference>
<dbReference type="PANTHER" id="PTHR24099:SF23">
    <property type="entry name" value="E3 UBIQUITIN-PROTEIN LIGASE MIDLINE-1"/>
    <property type="match status" value="1"/>
</dbReference>
<dbReference type="PANTHER" id="PTHR24099">
    <property type="entry name" value="E3 UBIQUITIN-PROTEIN LIGASE TRIM36-RELATED"/>
    <property type="match status" value="1"/>
</dbReference>
<dbReference type="Pfam" id="PF22586">
    <property type="entry name" value="ANCHR-like_BBOX"/>
    <property type="match status" value="1"/>
</dbReference>
<dbReference type="Pfam" id="PF18568">
    <property type="entry name" value="COS"/>
    <property type="match status" value="1"/>
</dbReference>
<dbReference type="Pfam" id="PF00041">
    <property type="entry name" value="fn3"/>
    <property type="match status" value="1"/>
</dbReference>
<dbReference type="Pfam" id="PF00622">
    <property type="entry name" value="SPRY"/>
    <property type="match status" value="1"/>
</dbReference>
<dbReference type="Pfam" id="PF00643">
    <property type="entry name" value="zf-B_box"/>
    <property type="match status" value="1"/>
</dbReference>
<dbReference type="Pfam" id="PF13445">
    <property type="entry name" value="zf-RING_UBOX"/>
    <property type="match status" value="1"/>
</dbReference>
<dbReference type="PRINTS" id="PR01407">
    <property type="entry name" value="BUTYPHLNCDUF"/>
</dbReference>
<dbReference type="SMART" id="SM00502">
    <property type="entry name" value="BBC"/>
    <property type="match status" value="1"/>
</dbReference>
<dbReference type="SMART" id="SM00336">
    <property type="entry name" value="BBOX"/>
    <property type="match status" value="2"/>
</dbReference>
<dbReference type="SMART" id="SM00060">
    <property type="entry name" value="FN3"/>
    <property type="match status" value="1"/>
</dbReference>
<dbReference type="SMART" id="SM00184">
    <property type="entry name" value="RING"/>
    <property type="match status" value="1"/>
</dbReference>
<dbReference type="SMART" id="SM00449">
    <property type="entry name" value="SPRY"/>
    <property type="match status" value="1"/>
</dbReference>
<dbReference type="SUPFAM" id="SSF57845">
    <property type="entry name" value="B-box zinc-binding domain"/>
    <property type="match status" value="1"/>
</dbReference>
<dbReference type="SUPFAM" id="SSF49899">
    <property type="entry name" value="Concanavalin A-like lectins/glucanases"/>
    <property type="match status" value="1"/>
</dbReference>
<dbReference type="SUPFAM" id="SSF49265">
    <property type="entry name" value="Fibronectin type III"/>
    <property type="match status" value="1"/>
</dbReference>
<dbReference type="SUPFAM" id="SSF57850">
    <property type="entry name" value="RING/U-box"/>
    <property type="match status" value="1"/>
</dbReference>
<dbReference type="PROSITE" id="PS50188">
    <property type="entry name" value="B302_SPRY"/>
    <property type="match status" value="1"/>
</dbReference>
<dbReference type="PROSITE" id="PS51262">
    <property type="entry name" value="COS"/>
    <property type="match status" value="1"/>
</dbReference>
<dbReference type="PROSITE" id="PS50853">
    <property type="entry name" value="FN3"/>
    <property type="match status" value="1"/>
</dbReference>
<dbReference type="PROSITE" id="PS50119">
    <property type="entry name" value="ZF_BBOX"/>
    <property type="match status" value="1"/>
</dbReference>
<dbReference type="PROSITE" id="PS00518">
    <property type="entry name" value="ZF_RING_1"/>
    <property type="match status" value="1"/>
</dbReference>
<dbReference type="PROSITE" id="PS50089">
    <property type="entry name" value="ZF_RING_2"/>
    <property type="match status" value="1"/>
</dbReference>
<reference key="1">
    <citation type="journal article" date="1997" name="Nat. Genet.">
        <title>Opitz G/BBB syndrome, a defect of midline development, is due to mutations in a new RING finger gene on Xp22.</title>
        <authorList>
            <person name="Quaderi N.A."/>
            <person name="Schweiger S."/>
            <person name="Gaudenz K."/>
            <person name="Franco B."/>
            <person name="Rugarli E.I."/>
            <person name="Berger W."/>
            <person name="Feldman G.J."/>
            <person name="Volta M."/>
            <person name="Andolfi G."/>
            <person name="Gilgenkrantz S."/>
            <person name="Marion R.W."/>
            <person name="Hennekam R.C.M."/>
            <person name="Opitz J.M."/>
            <person name="Muenke M."/>
            <person name="Ropers H.-H."/>
            <person name="Ballabio A."/>
        </authorList>
    </citation>
    <scope>NUCLEOTIDE SEQUENCE [MRNA] (ISOFORM 1)</scope>
    <scope>VARIANTS GBBB MET-438 DEL AND PHE-ILE-ASP-SER-GLY-ARG-HIS-LEU-534 INS</scope>
    <source>
        <tissue>Neuron</tissue>
    </source>
</reference>
<reference key="2">
    <citation type="journal article" date="1998" name="Hum. Mol. Genet.">
        <title>The human FXY gene is located within Xp22.3: implications for evolution of the mammalian X chromosome.</title>
        <authorList>
            <person name="Perry J."/>
            <person name="Feather S."/>
            <person name="Smith A."/>
            <person name="Palmer S."/>
            <person name="Ashworth A."/>
        </authorList>
    </citation>
    <scope>NUCLEOTIDE SEQUENCE [MRNA] (ISOFORM 1)</scope>
    <source>
        <tissue>Placenta</tissue>
    </source>
</reference>
<reference key="3">
    <citation type="journal article" date="1998" name="Genomics">
        <title>Characterization and physical mapping in human and mouse of a novel RING finger gene in Xp22.</title>
        <authorList>
            <person name="Van den Veyver I.B."/>
            <person name="Cormier T.A."/>
            <person name="Jurecic V."/>
            <person name="Baldini A."/>
            <person name="Zoghbi H.Y."/>
        </authorList>
    </citation>
    <scope>NUCLEOTIDE SEQUENCE [MRNA] (ISOFORM 1)</scope>
    <source>
        <tissue>Fetal kidney</tissue>
    </source>
</reference>
<reference key="4">
    <citation type="journal article" date="2000" name="Hum. Mol. Genet.">
        <title>New mutations in MID1 provide support for loss of function as the cause of X-linked Opitz syndrome.</title>
        <authorList>
            <person name="Cox T.C."/>
            <person name="Allen L.R."/>
            <person name="Cox L.L."/>
            <person name="Hopwood B."/>
            <person name="Goodwin B."/>
            <person name="Haan E."/>
            <person name="Suthers G.K."/>
        </authorList>
    </citation>
    <scope>NUCLEOTIDE SEQUENCE [MRNA] (ISOFORM 1)</scope>
    <scope>VARIANT GBBB PRO-626</scope>
    <source>
        <tissue>Brain</tissue>
    </source>
</reference>
<reference key="5">
    <citation type="journal article" date="2001" name="EMBO J.">
        <title>The tripartite motif family identifies cell compartments.</title>
        <authorList>
            <person name="Reymond A."/>
            <person name="Meroni G."/>
            <person name="Fantozzi A."/>
            <person name="Merla G."/>
            <person name="Cairo S."/>
            <person name="Luzi L."/>
            <person name="Riganelli D."/>
            <person name="Zanaria E."/>
            <person name="Messali S."/>
            <person name="Cainarca S."/>
            <person name="Guffanti A."/>
            <person name="Minucci S."/>
            <person name="Pelicci P.G."/>
            <person name="Ballabio A."/>
        </authorList>
    </citation>
    <scope>NUCLEOTIDE SEQUENCE [MRNA] (ISOFORMS 1 AND 2)</scope>
</reference>
<reference key="6">
    <citation type="journal article" date="2004" name="Nat. Genet.">
        <title>Complete sequencing and characterization of 21,243 full-length human cDNAs.</title>
        <authorList>
            <person name="Ota T."/>
            <person name="Suzuki Y."/>
            <person name="Nishikawa T."/>
            <person name="Otsuki T."/>
            <person name="Sugiyama T."/>
            <person name="Irie R."/>
            <person name="Wakamatsu A."/>
            <person name="Hayashi K."/>
            <person name="Sato H."/>
            <person name="Nagai K."/>
            <person name="Kimura K."/>
            <person name="Makita H."/>
            <person name="Sekine M."/>
            <person name="Obayashi M."/>
            <person name="Nishi T."/>
            <person name="Shibahara T."/>
            <person name="Tanaka T."/>
            <person name="Ishii S."/>
            <person name="Yamamoto J."/>
            <person name="Saito K."/>
            <person name="Kawai Y."/>
            <person name="Isono Y."/>
            <person name="Nakamura Y."/>
            <person name="Nagahari K."/>
            <person name="Murakami K."/>
            <person name="Yasuda T."/>
            <person name="Iwayanagi T."/>
            <person name="Wagatsuma M."/>
            <person name="Shiratori A."/>
            <person name="Sudo H."/>
            <person name="Hosoiri T."/>
            <person name="Kaku Y."/>
            <person name="Kodaira H."/>
            <person name="Kondo H."/>
            <person name="Sugawara M."/>
            <person name="Takahashi M."/>
            <person name="Kanda K."/>
            <person name="Yokoi T."/>
            <person name="Furuya T."/>
            <person name="Kikkawa E."/>
            <person name="Omura Y."/>
            <person name="Abe K."/>
            <person name="Kamihara K."/>
            <person name="Katsuta N."/>
            <person name="Sato K."/>
            <person name="Tanikawa M."/>
            <person name="Yamazaki M."/>
            <person name="Ninomiya K."/>
            <person name="Ishibashi T."/>
            <person name="Yamashita H."/>
            <person name="Murakawa K."/>
            <person name="Fujimori K."/>
            <person name="Tanai H."/>
            <person name="Kimata M."/>
            <person name="Watanabe M."/>
            <person name="Hiraoka S."/>
            <person name="Chiba Y."/>
            <person name="Ishida S."/>
            <person name="Ono Y."/>
            <person name="Takiguchi S."/>
            <person name="Watanabe S."/>
            <person name="Yosida M."/>
            <person name="Hotuta T."/>
            <person name="Kusano J."/>
            <person name="Kanehori K."/>
            <person name="Takahashi-Fujii A."/>
            <person name="Hara H."/>
            <person name="Tanase T.-O."/>
            <person name="Nomura Y."/>
            <person name="Togiya S."/>
            <person name="Komai F."/>
            <person name="Hara R."/>
            <person name="Takeuchi K."/>
            <person name="Arita M."/>
            <person name="Imose N."/>
            <person name="Musashino K."/>
            <person name="Yuuki H."/>
            <person name="Oshima A."/>
            <person name="Sasaki N."/>
            <person name="Aotsuka S."/>
            <person name="Yoshikawa Y."/>
            <person name="Matsunawa H."/>
            <person name="Ichihara T."/>
            <person name="Shiohata N."/>
            <person name="Sano S."/>
            <person name="Moriya S."/>
            <person name="Momiyama H."/>
            <person name="Satoh N."/>
            <person name="Takami S."/>
            <person name="Terashima Y."/>
            <person name="Suzuki O."/>
            <person name="Nakagawa S."/>
            <person name="Senoh A."/>
            <person name="Mizoguchi H."/>
            <person name="Goto Y."/>
            <person name="Shimizu F."/>
            <person name="Wakebe H."/>
            <person name="Hishigaki H."/>
            <person name="Watanabe T."/>
            <person name="Sugiyama A."/>
            <person name="Takemoto M."/>
            <person name="Kawakami B."/>
            <person name="Yamazaki M."/>
            <person name="Watanabe K."/>
            <person name="Kumagai A."/>
            <person name="Itakura S."/>
            <person name="Fukuzumi Y."/>
            <person name="Fujimori Y."/>
            <person name="Komiyama M."/>
            <person name="Tashiro H."/>
            <person name="Tanigami A."/>
            <person name="Fujiwara T."/>
            <person name="Ono T."/>
            <person name="Yamada K."/>
            <person name="Fujii Y."/>
            <person name="Ozaki K."/>
            <person name="Hirao M."/>
            <person name="Ohmori Y."/>
            <person name="Kawabata A."/>
            <person name="Hikiji T."/>
            <person name="Kobatake N."/>
            <person name="Inagaki H."/>
            <person name="Ikema Y."/>
            <person name="Okamoto S."/>
            <person name="Okitani R."/>
            <person name="Kawakami T."/>
            <person name="Noguchi S."/>
            <person name="Itoh T."/>
            <person name="Shigeta K."/>
            <person name="Senba T."/>
            <person name="Matsumura K."/>
            <person name="Nakajima Y."/>
            <person name="Mizuno T."/>
            <person name="Morinaga M."/>
            <person name="Sasaki M."/>
            <person name="Togashi T."/>
            <person name="Oyama M."/>
            <person name="Hata H."/>
            <person name="Watanabe M."/>
            <person name="Komatsu T."/>
            <person name="Mizushima-Sugano J."/>
            <person name="Satoh T."/>
            <person name="Shirai Y."/>
            <person name="Takahashi Y."/>
            <person name="Nakagawa K."/>
            <person name="Okumura K."/>
            <person name="Nagase T."/>
            <person name="Nomura N."/>
            <person name="Kikuchi H."/>
            <person name="Masuho Y."/>
            <person name="Yamashita R."/>
            <person name="Nakai K."/>
            <person name="Yada T."/>
            <person name="Nakamura Y."/>
            <person name="Ohara O."/>
            <person name="Isogai T."/>
            <person name="Sugano S."/>
        </authorList>
    </citation>
    <scope>NUCLEOTIDE SEQUENCE [LARGE SCALE MRNA] (ISOFORM 2)</scope>
    <source>
        <tissue>Placenta</tissue>
    </source>
</reference>
<reference key="7">
    <citation type="submission" date="2005-07" db="EMBL/GenBank/DDBJ databases">
        <authorList>
            <person name="Mural R.J."/>
            <person name="Istrail S."/>
            <person name="Sutton G.G."/>
            <person name="Florea L."/>
            <person name="Halpern A.L."/>
            <person name="Mobarry C.M."/>
            <person name="Lippert R."/>
            <person name="Walenz B."/>
            <person name="Shatkay H."/>
            <person name="Dew I."/>
            <person name="Miller J.R."/>
            <person name="Flanigan M.J."/>
            <person name="Edwards N.J."/>
            <person name="Bolanos R."/>
            <person name="Fasulo D."/>
            <person name="Halldorsson B.V."/>
            <person name="Hannenhalli S."/>
            <person name="Turner R."/>
            <person name="Yooseph S."/>
            <person name="Lu F."/>
            <person name="Nusskern D.R."/>
            <person name="Shue B.C."/>
            <person name="Zheng X.H."/>
            <person name="Zhong F."/>
            <person name="Delcher A.L."/>
            <person name="Huson D.H."/>
            <person name="Kravitz S.A."/>
            <person name="Mouchard L."/>
            <person name="Reinert K."/>
            <person name="Remington K.A."/>
            <person name="Clark A.G."/>
            <person name="Waterman M.S."/>
            <person name="Eichler E.E."/>
            <person name="Adams M.D."/>
            <person name="Hunkapiller M.W."/>
            <person name="Myers E.W."/>
            <person name="Venter J.C."/>
        </authorList>
    </citation>
    <scope>NUCLEOTIDE SEQUENCE [LARGE SCALE GENOMIC DNA]</scope>
</reference>
<reference key="8">
    <citation type="journal article" date="2004" name="Genome Res.">
        <title>The status, quality, and expansion of the NIH full-length cDNA project: the Mammalian Gene Collection (MGC).</title>
        <authorList>
            <consortium name="The MGC Project Team"/>
        </authorList>
    </citation>
    <scope>NUCLEOTIDE SEQUENCE [LARGE SCALE MRNA] (ISOFORM 1)</scope>
    <source>
        <tissue>Skin</tissue>
    </source>
</reference>
<reference key="9">
    <citation type="journal article" date="1999" name="Hum. Mol. Genet.">
        <title>Functional characterization of the Opitz syndrome gene product (midin): evidence for homodimerization and association with microtubules throughout the cell cycle.</title>
        <authorList>
            <person name="Cainarca S."/>
            <person name="Messali S."/>
            <person name="Ballabio A."/>
            <person name="Meroni G."/>
        </authorList>
    </citation>
    <scope>FUNCTION</scope>
</reference>
<reference key="10">
    <citation type="journal article" date="1999" name="Proc. Natl. Acad. Sci. U.S.A.">
        <title>The Opitz syndrome gene product, MID1, associates with microtubules.</title>
        <authorList>
            <person name="Schweiger S."/>
            <person name="Foerster J."/>
            <person name="Lehmann T."/>
            <person name="Suckow V."/>
            <person name="Muller Y.A."/>
            <person name="Walter G."/>
            <person name="Davies T."/>
            <person name="Porter H."/>
            <person name="van Bokhoven H."/>
            <person name="Lunt P.W."/>
            <person name="Traub P."/>
            <person name="Ropers H.H."/>
        </authorList>
    </citation>
    <scope>SUBCELLULAR LOCATION</scope>
</reference>
<reference key="11">
    <citation type="journal article" date="2001" name="Nat. Genet.">
        <title>MID1, mutated in Opitz syndrome, encodes an ubiquitin ligase that targets phosphatase 2A for degradation.</title>
        <authorList>
            <person name="Trockenbacher A."/>
            <person name="Suckow V."/>
            <person name="Foerster J."/>
            <person name="Winter J."/>
            <person name="Krauss S."/>
            <person name="Ropers H.H."/>
            <person name="Schneider R."/>
            <person name="Schweiger S."/>
        </authorList>
    </citation>
    <scope>FUNCTION</scope>
</reference>
<reference key="12">
    <citation type="journal article" date="2002" name="BMC Cell Biol.">
        <title>MID1 and MID2 homo- and heterodimerise to tether the rapamycin-sensitive PP2A regulatory subunit, Alpha 4, to microtubules: implications for the clinical variability of X-linked Opitz GBBB syndrome and other developmental disorders.</title>
        <authorList>
            <person name="Short K.M."/>
            <person name="Hopwood B."/>
            <person name="Yi Z."/>
            <person name="Cox T.C."/>
        </authorList>
    </citation>
    <scope>INTERACTION WITH IGBP1</scope>
    <scope>PHOSPHORYLATION</scope>
</reference>
<reference key="13">
    <citation type="journal article" date="2006" name="Cell">
        <title>Global, in vivo, and site-specific phosphorylation dynamics in signaling networks.</title>
        <authorList>
            <person name="Olsen J.V."/>
            <person name="Blagoev B."/>
            <person name="Gnad F."/>
            <person name="Macek B."/>
            <person name="Kumar C."/>
            <person name="Mortensen P."/>
            <person name="Mann M."/>
        </authorList>
    </citation>
    <scope>IDENTIFICATION BY MASS SPECTROMETRY [LARGE SCALE ANALYSIS]</scope>
    <source>
        <tissue>Cervix carcinoma</tissue>
    </source>
</reference>
<reference key="14">
    <citation type="journal article" date="2008" name="Proc. Natl. Acad. Sci. U.S.A.">
        <title>A quantitative atlas of mitotic phosphorylation.</title>
        <authorList>
            <person name="Dephoure N."/>
            <person name="Zhou C."/>
            <person name="Villen J."/>
            <person name="Beausoleil S.A."/>
            <person name="Bakalarski C.E."/>
            <person name="Elledge S.J."/>
            <person name="Gygi S.P."/>
        </authorList>
    </citation>
    <scope>IDENTIFICATION BY MASS SPECTROMETRY [LARGE SCALE ANALYSIS]</scope>
    <source>
        <tissue>Cervix carcinoma</tissue>
    </source>
</reference>
<reference key="15">
    <citation type="journal article" date="2009" name="Anal. Chem.">
        <title>Lys-N and trypsin cover complementary parts of the phosphoproteome in a refined SCX-based approach.</title>
        <authorList>
            <person name="Gauci S."/>
            <person name="Helbig A.O."/>
            <person name="Slijper M."/>
            <person name="Krijgsveld J."/>
            <person name="Heck A.J."/>
            <person name="Mohammed S."/>
        </authorList>
    </citation>
    <scope>IDENTIFICATION BY MASS SPECTROMETRY [LARGE SCALE ANALYSIS]</scope>
</reference>
<reference key="16">
    <citation type="journal article" date="2011" name="Sci. Signal.">
        <title>System-wide temporal characterization of the proteome and phosphoproteome of human embryonic stem cell differentiation.</title>
        <authorList>
            <person name="Rigbolt K.T."/>
            <person name="Prokhorova T.A."/>
            <person name="Akimov V."/>
            <person name="Henningsen J."/>
            <person name="Johansen P.T."/>
            <person name="Kratchmarova I."/>
            <person name="Kassem M."/>
            <person name="Mann M."/>
            <person name="Olsen J.V."/>
            <person name="Blagoev B."/>
        </authorList>
    </citation>
    <scope>PHOSPHORYLATION [LARGE SCALE ANALYSIS] AT SER-92</scope>
    <scope>IDENTIFICATION BY MASS SPECTROMETRY [LARGE SCALE ANALYSIS]</scope>
</reference>
<reference key="17">
    <citation type="journal article" date="2012" name="J. Biol. Chem.">
        <title>Monoubiquitination promotes calpain cleavage of the protein phosphatase 2A (PP2A) regulatory subunit alpha4, altering PP2A stability and microtubule-associated protein phosphorylation.</title>
        <authorList>
            <person name="Watkins G.R."/>
            <person name="Wang N."/>
            <person name="Mazalouskas M.D."/>
            <person name="Gomez R.J."/>
            <person name="Guthrie C.R."/>
            <person name="Kraemer B.C."/>
            <person name="Schweiger S."/>
            <person name="Spiller B.W."/>
            <person name="Wadzinski B.E."/>
        </authorList>
    </citation>
    <scope>FUNCTION</scope>
    <scope>SUBUNIT</scope>
</reference>
<reference key="18">
    <citation type="journal article" date="2012" name="PLoS ONE">
        <title>TRIM16 acts as an E3 ubiquitin ligase and can heterodimerize with other TRIM family members.</title>
        <authorList>
            <person name="Bell J.L."/>
            <person name="Malyukova A."/>
            <person name="Holien J.K."/>
            <person name="Koach J."/>
            <person name="Parker M.W."/>
            <person name="Kavallaris M."/>
            <person name="Marshall G.M."/>
            <person name="Cheung B.B."/>
        </authorList>
    </citation>
    <scope>INTERACTION WITH TRIM16</scope>
</reference>
<reference key="19">
    <citation type="journal article" date="2013" name="J. Proteome Res.">
        <title>Toward a comprehensive characterization of a human cancer cell phosphoproteome.</title>
        <authorList>
            <person name="Zhou H."/>
            <person name="Di Palma S."/>
            <person name="Preisinger C."/>
            <person name="Peng M."/>
            <person name="Polat A.N."/>
            <person name="Heck A.J."/>
            <person name="Mohammed S."/>
        </authorList>
    </citation>
    <scope>PHOSPHORYLATION [LARGE SCALE ANALYSIS] AT SER-92; SER-96 AND SER-511</scope>
    <scope>IDENTIFICATION BY MASS SPECTROMETRY [LARGE SCALE ANALYSIS]</scope>
    <source>
        <tissue>Cervix carcinoma</tissue>
    </source>
</reference>
<reference key="20">
    <citation type="journal article" date="2014" name="J. Proteomics">
        <title>An enzyme assisted RP-RPLC approach for in-depth analysis of human liver phosphoproteome.</title>
        <authorList>
            <person name="Bian Y."/>
            <person name="Song C."/>
            <person name="Cheng K."/>
            <person name="Dong M."/>
            <person name="Wang F."/>
            <person name="Huang J."/>
            <person name="Sun D."/>
            <person name="Wang L."/>
            <person name="Ye M."/>
            <person name="Zou H."/>
        </authorList>
    </citation>
    <scope>IDENTIFICATION BY MASS SPECTROMETRY [LARGE SCALE ANALYSIS]</scope>
    <source>
        <tissue>Liver</tissue>
    </source>
</reference>
<reference key="21">
    <citation type="journal article" date="2006" name="J. Mol. Biol.">
        <title>Solution structure of the RBCC/TRIM B-box1 domain of human MID1: B-box with a RING.</title>
        <authorList>
            <person name="Massiah M.A."/>
            <person name="Simmons B.N."/>
            <person name="Short K.M."/>
            <person name="Cox T.C."/>
        </authorList>
    </citation>
    <scope>STRUCTURE BY NMR OF 87-164</scope>
</reference>
<reference key="22">
    <citation type="journal article" date="1998" name="Am. J. Hum. Genet.">
        <title>Opitz G/BBB syndrome in Xp22: mutations in the MID1 gene cluster in the carboxy-terminal domain.</title>
        <authorList>
            <person name="Gaudenz K."/>
            <person name="Roessler E."/>
            <person name="Quaderi N.A."/>
            <person name="Franco B."/>
            <person name="Feldman G.J."/>
            <person name="Gasser D.L."/>
            <person name="Wittwer B."/>
            <person name="Horst J."/>
            <person name="Montini E."/>
            <person name="Opitz J.M."/>
            <person name="Ballabio A."/>
            <person name="Muenke M."/>
        </authorList>
    </citation>
    <scope>VARIANTS GBBB ARG-266 AND THR-536</scope>
</reference>
<reference key="23">
    <citation type="journal article" date="1998" name="Am. J. Hum. Genet.">
        <authorList>
            <person name="Gaudenz K."/>
            <person name="Roessler E."/>
            <person name="Quaderi N.A."/>
            <person name="Franco B."/>
            <person name="Feldman G.J."/>
            <person name="Gasser D.L."/>
            <person name="Wittwer B."/>
            <person name="Horst J."/>
            <person name="Montini E."/>
            <person name="Opitz J.M."/>
            <person name="Ballabio A."/>
            <person name="Muenke M."/>
        </authorList>
    </citation>
    <scope>ERRATUM OF PUBMED:9718340</scope>
</reference>
<reference key="24">
    <citation type="journal article" date="2005" name="Am. J. Med. Genet. A">
        <title>Mild phenotypes in a series of patients with Opitz GBBB syndrome with MID1 mutations.</title>
        <authorList>
            <person name="So J."/>
            <person name="Suckow V."/>
            <person name="Kijas Z."/>
            <person name="Kalscheuer V."/>
            <person name="Moser B."/>
            <person name="Winter J."/>
            <person name="Baars M."/>
            <person name="Firth H."/>
            <person name="Lunt P."/>
            <person name="Hamel B.C.J."/>
            <person name="Meinecke P."/>
            <person name="Moraine C."/>
            <person name="Odent S."/>
            <person name="Schinzel A."/>
            <person name="van der Smagt J.J."/>
            <person name="Devriendt K."/>
            <person name="Albrecht B."/>
            <person name="Gillessen-Kaesbach G."/>
            <person name="van der Burgt I."/>
            <person name="Petrij F."/>
            <person name="Faivre L."/>
            <person name="McGaughran J."/>
            <person name="McKenzie F."/>
            <person name="Opitz J.M."/>
            <person name="Cox T."/>
            <person name="Schweiger S."/>
        </authorList>
    </citation>
    <scope>VARIANTS GBBB PRO-295 AND 391-LEU-CYS-392 DELINS ARG</scope>
</reference>
<comment type="function">
    <text evidence="9 11 14">Has E3 ubiquitin ligase activity towards IGBP1, promoting its monoubiquitination, which results in deprotection of the catalytic subunit of protein phosphatase PP2A, and its subsequent degradation by polyubiquitination.</text>
</comment>
<comment type="catalytic activity">
    <reaction>
        <text>S-ubiquitinyl-[E2 ubiquitin-conjugating enzyme]-L-cysteine + [acceptor protein]-L-lysine = [E2 ubiquitin-conjugating enzyme]-L-cysteine + N(6)-ubiquitinyl-[acceptor protein]-L-lysine.</text>
        <dbReference type="EC" id="2.3.2.27"/>
    </reaction>
</comment>
<comment type="subunit">
    <text evidence="12 14 15">Homodimer or heterodimer with MID2. Interacts with IGBP1. Interacts with TRIM16.</text>
</comment>
<comment type="interaction">
    <interactant intactId="EBI-2340316">
        <id>O15344</id>
    </interactant>
    <interactant intactId="EBI-358049">
        <id>Q13895</id>
        <label>BYSL</label>
    </interactant>
    <organismsDiffer>false</organismsDiffer>
    <experiments>4</experiments>
</comment>
<comment type="interaction">
    <interactant intactId="EBI-2340316">
        <id>O15344</id>
    </interactant>
    <interactant intactId="EBI-295634">
        <id>Q16543</id>
        <label>CDC37</label>
    </interactant>
    <organismsDiffer>false</organismsDiffer>
    <experiments>3</experiments>
</comment>
<comment type="interaction">
    <interactant intactId="EBI-2340316">
        <id>O15344</id>
    </interactant>
    <interactant intactId="EBI-2212355">
        <id>Q49AN0</id>
        <label>CRY2</label>
    </interactant>
    <organismsDiffer>false</organismsDiffer>
    <experiments>3</experiments>
</comment>
<comment type="interaction">
    <interactant intactId="EBI-2340316">
        <id>O15344</id>
    </interactant>
    <interactant intactId="EBI-3914009">
        <id>Q9NR20</id>
        <label>DYRK4</label>
    </interactant>
    <organismsDiffer>false</organismsDiffer>
    <experiments>3</experiments>
</comment>
<comment type="interaction">
    <interactant intactId="EBI-2340316">
        <id>O15344</id>
    </interactant>
    <interactant intactId="EBI-2339219">
        <id>Q08426</id>
        <label>EHHADH</label>
    </interactant>
    <organismsDiffer>false</organismsDiffer>
    <experiments>8</experiments>
</comment>
<comment type="interaction">
    <interactant intactId="EBI-2340316">
        <id>O15344</id>
    </interactant>
    <interactant intactId="EBI-742350">
        <id>Q14241</id>
        <label>ELOA</label>
    </interactant>
    <organismsDiffer>false</organismsDiffer>
    <experiments>3</experiments>
</comment>
<comment type="interaction">
    <interactant intactId="EBI-2340316">
        <id>O15344</id>
    </interactant>
    <interactant intactId="EBI-12135243">
        <id>O95208-2</id>
        <label>EPN2</label>
    </interactant>
    <organismsDiffer>false</organismsDiffer>
    <experiments>3</experiments>
</comment>
<comment type="interaction">
    <interactant intactId="EBI-2340316">
        <id>O15344</id>
    </interactant>
    <interactant intactId="EBI-12866582">
        <id>I6L9I8</id>
        <label>EPN3</label>
    </interactant>
    <organismsDiffer>false</organismsDiffer>
    <experiments>3</experiments>
</comment>
<comment type="interaction">
    <interactant intactId="EBI-2340316">
        <id>O15344</id>
    </interactant>
    <interactant intactId="EBI-742802">
        <id>Q9Y247</id>
        <label>FAM50B</label>
    </interactant>
    <organismsDiffer>false</organismsDiffer>
    <experiments>3</experiments>
</comment>
<comment type="interaction">
    <interactant intactId="EBI-2340316">
        <id>O15344</id>
    </interactant>
    <interactant intactId="EBI-10226858">
        <id>Q0VDC6</id>
        <label>FKBP1A</label>
    </interactant>
    <organismsDiffer>false</organismsDiffer>
    <experiments>6</experiments>
</comment>
<comment type="interaction">
    <interactant intactId="EBI-2340316">
        <id>O15344</id>
    </interactant>
    <interactant intactId="EBI-10172181">
        <id>Q53SE7</id>
        <label>FLJ13057</label>
    </interactant>
    <organismsDiffer>false</organismsDiffer>
    <experiments>3</experiments>
</comment>
<comment type="interaction">
    <interactant intactId="EBI-2340316">
        <id>O15344</id>
    </interactant>
    <interactant intactId="EBI-2548508">
        <id>Q96IK5</id>
        <label>GMCL1</label>
    </interactant>
    <organismsDiffer>false</organismsDiffer>
    <experiments>10</experiments>
</comment>
<comment type="interaction">
    <interactant intactId="EBI-2340316">
        <id>O15344</id>
    </interactant>
    <interactant intactId="EBI-1055954">
        <id>P78318</id>
        <label>IGBP1</label>
    </interactant>
    <organismsDiffer>false</organismsDiffer>
    <experiments>5</experiments>
</comment>
<comment type="interaction">
    <interactant intactId="EBI-2340316">
        <id>O15344</id>
    </interactant>
    <interactant intactId="EBI-8472129">
        <id>Q9HAQ2</id>
        <label>KIF9</label>
    </interactant>
    <organismsDiffer>false</organismsDiffer>
    <experiments>3</experiments>
</comment>
<comment type="interaction">
    <interactant intactId="EBI-2340316">
        <id>O15344</id>
    </interactant>
    <interactant intactId="EBI-2864512">
        <id>P50221</id>
        <label>MEOX1</label>
    </interactant>
    <organismsDiffer>false</organismsDiffer>
    <experiments>7</experiments>
</comment>
<comment type="interaction">
    <interactant intactId="EBI-2340316">
        <id>O15344</id>
    </interactant>
    <interactant intactId="EBI-2340316">
        <id>O15344</id>
        <label>MID1</label>
    </interactant>
    <organismsDiffer>false</organismsDiffer>
    <experiments>6</experiments>
</comment>
<comment type="interaction">
    <interactant intactId="EBI-2340316">
        <id>O15344</id>
    </interactant>
    <interactant intactId="EBI-10172526">
        <id>Q9UJV3-2</id>
        <label>MID2</label>
    </interactant>
    <organismsDiffer>false</organismsDiffer>
    <experiments>9</experiments>
</comment>
<comment type="interaction">
    <interactant intactId="EBI-2340316">
        <id>O15344</id>
    </interactant>
    <interactant intactId="EBI-5278391">
        <id>O75113</id>
        <label>N4BP1</label>
    </interactant>
    <organismsDiffer>false</organismsDiffer>
    <experiments>3</experiments>
</comment>
<comment type="interaction">
    <interactant intactId="EBI-2340316">
        <id>O15344</id>
    </interactant>
    <interactant intactId="EBI-746259">
        <id>Q96DC9</id>
        <label>OTUB2</label>
    </interactant>
    <organismsDiffer>false</organismsDiffer>
    <experiments>3</experiments>
</comment>
<comment type="interaction">
    <interactant intactId="EBI-2340316">
        <id>O15344</id>
    </interactant>
    <interactant intactId="EBI-602382">
        <id>Q16512</id>
        <label>PKN1</label>
    </interactant>
    <organismsDiffer>false</organismsDiffer>
    <experiments>3</experiments>
</comment>
<comment type="interaction">
    <interactant intactId="EBI-2340316">
        <id>O15344</id>
    </interactant>
    <interactant intactId="EBI-12154567">
        <id>Q8WV60</id>
        <label>PTCD2</label>
    </interactant>
    <organismsDiffer>false</organismsDiffer>
    <experiments>3</experiments>
</comment>
<comment type="interaction">
    <interactant intactId="EBI-2340316">
        <id>O15344</id>
    </interactant>
    <interactant intactId="EBI-954696">
        <id>Q8N8B7</id>
        <label>TCEANC</label>
    </interactant>
    <organismsDiffer>false</organismsDiffer>
    <experiments>3</experiments>
</comment>
<comment type="interaction">
    <interactant intactId="EBI-2340316">
        <id>O15344</id>
    </interactant>
    <interactant intactId="EBI-743540">
        <id>P51668</id>
        <label>UBE2D1</label>
    </interactant>
    <organismsDiffer>false</organismsDiffer>
    <experiments>7</experiments>
</comment>
<comment type="interaction">
    <interactant intactId="EBI-2340316">
        <id>O15344</id>
    </interactant>
    <interactant intactId="EBI-347677">
        <id>P62837</id>
        <label>UBE2D2</label>
    </interactant>
    <organismsDiffer>false</organismsDiffer>
    <experiments>4</experiments>
</comment>
<comment type="interaction">
    <interactant intactId="EBI-2340316">
        <id>O15344</id>
    </interactant>
    <interactant intactId="EBI-348268">
        <id>P61077</id>
        <label>UBE2D3</label>
    </interactant>
    <organismsDiffer>false</organismsDiffer>
    <experiments>8</experiments>
</comment>
<comment type="interaction">
    <interactant intactId="EBI-2340316">
        <id>O15344</id>
    </interactant>
    <interactant intactId="EBI-745527">
        <id>Q9Y2X8</id>
        <label>UBE2D4</label>
    </interactant>
    <organismsDiffer>false</organismsDiffer>
    <experiments>4</experiments>
</comment>
<comment type="interaction">
    <interactant intactId="EBI-2340316">
        <id>O15344</id>
    </interactant>
    <interactant intactId="EBI-2129763">
        <id>Q96LR5</id>
        <label>UBE2E2</label>
    </interactant>
    <organismsDiffer>false</organismsDiffer>
    <experiments>12</experiments>
</comment>
<comment type="interaction">
    <interactant intactId="EBI-2340316">
        <id>O15344</id>
    </interactant>
    <interactant intactId="EBI-348496">
        <id>Q969T4</id>
        <label>UBE2E3</label>
    </interactant>
    <organismsDiffer>false</organismsDiffer>
    <experiments>8</experiments>
</comment>
<comment type="interaction">
    <interactant intactId="EBI-2340316">
        <id>O15344</id>
    </interactant>
    <interactant intactId="EBI-473850">
        <id>P61086</id>
        <label>UBE2K</label>
    </interactant>
    <organismsDiffer>false</organismsDiffer>
    <experiments>3</experiments>
</comment>
<comment type="interaction">
    <interactant intactId="EBI-2340316">
        <id>O15344</id>
    </interactant>
    <interactant intactId="EBI-711173">
        <id>P68036</id>
        <label>UBE2L3</label>
    </interactant>
    <organismsDiffer>false</organismsDiffer>
    <experiments>4</experiments>
</comment>
<comment type="interaction">
    <interactant intactId="EBI-2340316">
        <id>O15344</id>
    </interactant>
    <interactant intactId="EBI-2129974">
        <id>O14933</id>
        <label>UBE2L6</label>
    </interactant>
    <organismsDiffer>false</organismsDiffer>
    <experiments>3</experiments>
</comment>
<comment type="interaction">
    <interactant intactId="EBI-2340316">
        <id>O15344</id>
    </interactant>
    <interactant intactId="EBI-745871">
        <id>Q9HAC8</id>
        <label>UBTD1</label>
    </interactant>
    <organismsDiffer>false</organismsDiffer>
    <experiments>6</experiments>
</comment>
<comment type="interaction">
    <interactant intactId="EBI-2340316">
        <id>O15344</id>
    </interactant>
    <interactant intactId="EBI-6255994">
        <id>Q5T7W0</id>
        <label>ZNF618</label>
    </interactant>
    <organismsDiffer>false</organismsDiffer>
    <experiments>3</experiments>
</comment>
<comment type="subcellular location">
    <subcellularLocation>
        <location evidence="8">Cytoplasm</location>
    </subcellularLocation>
    <subcellularLocation>
        <location evidence="8">Cytoplasm</location>
        <location evidence="8">Cytoskeleton</location>
    </subcellularLocation>
    <subcellularLocation>
        <location evidence="8">Cytoplasm</location>
        <location evidence="8">Cytoskeleton</location>
        <location evidence="8">Spindle</location>
    </subcellularLocation>
    <text>Microtubule-associated. It is associated with microtubules throughout the cell cycle, co-localizing with cytoplasmic fibers in interphase and with the mitotic spindle and midbodies during mitosis and cytokinesis.</text>
</comment>
<comment type="alternative products">
    <event type="alternative splicing"/>
    <isoform>
        <id>O15344-1</id>
        <name>1</name>
        <name>Alpha</name>
        <sequence type="displayed"/>
    </isoform>
    <isoform>
        <id>O15344-2</id>
        <name>2</name>
        <name>Beta</name>
        <sequence type="described" ref="VSP_005735"/>
    </isoform>
</comment>
<comment type="tissue specificity">
    <text>In the fetus, highest expression found in kidney, followed by brain and lung. Expressed at low levels in fetal liver. In the adult, most abundant in heart, placenta and brain.</text>
</comment>
<comment type="induction">
    <text>A retroviral element acts as an alternative tissue-specific promoter for this gene. The LTR of an HERV-E element enhances the expression in placenta and embryonic kidney.</text>
</comment>
<comment type="PTM">
    <text evidence="12">Phosphorylated on serine and threonine residues.</text>
</comment>
<comment type="disease" evidence="10 13 16 17">
    <disease id="DI-02094">
        <name>Opitz GBBB syndrome</name>
        <acronym>GBBB</acronym>
        <description>A congenital midline malformation syndrome characterized by hypertelorism, genital-urinary defects such as hypospadias in males and splayed labia in females, cleft lip/palate, laryngotracheoesophageal abnormalities, imperforate anus, developmental delay and congenital heart defects.</description>
        <dbReference type="MIM" id="300000"/>
    </disease>
    <text>The disease is caused by variants affecting the gene represented in this entry. MID1 mutations produce proteins with a decreased affinity for microtubules.</text>
</comment>
<comment type="similarity">
    <text evidence="20">Belongs to the TRIM/RBCC family.</text>
</comment>